<accession>A7ZWC6</accession>
<feature type="chain" id="PRO_1000060830" description="3-hydroxyacyl-[acyl-carrier-protein] dehydratase FabZ">
    <location>
        <begin position="1"/>
        <end position="151"/>
    </location>
</feature>
<feature type="active site" evidence="1">
    <location>
        <position position="54"/>
    </location>
</feature>
<reference key="1">
    <citation type="journal article" date="2008" name="J. Bacteriol.">
        <title>The pangenome structure of Escherichia coli: comparative genomic analysis of E. coli commensal and pathogenic isolates.</title>
        <authorList>
            <person name="Rasko D.A."/>
            <person name="Rosovitz M.J."/>
            <person name="Myers G.S.A."/>
            <person name="Mongodin E.F."/>
            <person name="Fricke W.F."/>
            <person name="Gajer P."/>
            <person name="Crabtree J."/>
            <person name="Sebaihia M."/>
            <person name="Thomson N.R."/>
            <person name="Chaudhuri R."/>
            <person name="Henderson I.R."/>
            <person name="Sperandio V."/>
            <person name="Ravel J."/>
        </authorList>
    </citation>
    <scope>NUCLEOTIDE SEQUENCE [LARGE SCALE GENOMIC DNA]</scope>
    <source>
        <strain>HS</strain>
    </source>
</reference>
<evidence type="ECO:0000255" key="1">
    <source>
        <dbReference type="HAMAP-Rule" id="MF_00406"/>
    </source>
</evidence>
<proteinExistence type="inferred from homology"/>
<keyword id="KW-0963">Cytoplasm</keyword>
<keyword id="KW-0441">Lipid A biosynthesis</keyword>
<keyword id="KW-0444">Lipid biosynthesis</keyword>
<keyword id="KW-0443">Lipid metabolism</keyword>
<keyword id="KW-0456">Lyase</keyword>
<sequence length="151" mass="17023">MTTNTHTLQIEEILELLPHRFPFLLVDRVLDFEEGRFLRAVKNVSVNESFFQGHFPGKPIFPGVLILEAMAQATGILAFKSVGKLEPGELYYFAGIDEARFKRPVVPGDQMIMEVTFEKTRRGLTRFKGVALVDGKVVCEATMMCARSREA</sequence>
<gene>
    <name evidence="1" type="primary">fabZ</name>
    <name type="ordered locus">EcHS_A0182</name>
</gene>
<dbReference type="EC" id="4.2.1.59" evidence="1"/>
<dbReference type="EMBL" id="CP000802">
    <property type="protein sequence ID" value="ABV04580.1"/>
    <property type="molecule type" value="Genomic_DNA"/>
</dbReference>
<dbReference type="RefSeq" id="WP_012135819.1">
    <property type="nucleotide sequence ID" value="NC_009800.1"/>
</dbReference>
<dbReference type="SMR" id="A7ZWC6"/>
<dbReference type="KEGG" id="ecx:EcHS_A0182"/>
<dbReference type="HOGENOM" id="CLU_078912_1_0_6"/>
<dbReference type="GO" id="GO:0005737">
    <property type="term" value="C:cytoplasm"/>
    <property type="evidence" value="ECO:0007669"/>
    <property type="project" value="UniProtKB-SubCell"/>
</dbReference>
<dbReference type="GO" id="GO:0016020">
    <property type="term" value="C:membrane"/>
    <property type="evidence" value="ECO:0007669"/>
    <property type="project" value="GOC"/>
</dbReference>
<dbReference type="GO" id="GO:0019171">
    <property type="term" value="F:(3R)-hydroxyacyl-[acyl-carrier-protein] dehydratase activity"/>
    <property type="evidence" value="ECO:0007669"/>
    <property type="project" value="UniProtKB-EC"/>
</dbReference>
<dbReference type="GO" id="GO:0006633">
    <property type="term" value="P:fatty acid biosynthetic process"/>
    <property type="evidence" value="ECO:0007669"/>
    <property type="project" value="UniProtKB-UniRule"/>
</dbReference>
<dbReference type="GO" id="GO:0009245">
    <property type="term" value="P:lipid A biosynthetic process"/>
    <property type="evidence" value="ECO:0007669"/>
    <property type="project" value="UniProtKB-UniRule"/>
</dbReference>
<dbReference type="CDD" id="cd01288">
    <property type="entry name" value="FabZ"/>
    <property type="match status" value="1"/>
</dbReference>
<dbReference type="FunFam" id="3.10.129.10:FF:000001">
    <property type="entry name" value="3-hydroxyacyl-[acyl-carrier-protein] dehydratase FabZ"/>
    <property type="match status" value="1"/>
</dbReference>
<dbReference type="Gene3D" id="3.10.129.10">
    <property type="entry name" value="Hotdog Thioesterase"/>
    <property type="match status" value="1"/>
</dbReference>
<dbReference type="HAMAP" id="MF_00406">
    <property type="entry name" value="FabZ"/>
    <property type="match status" value="1"/>
</dbReference>
<dbReference type="InterPro" id="IPR013114">
    <property type="entry name" value="FabA_FabZ"/>
</dbReference>
<dbReference type="InterPro" id="IPR010084">
    <property type="entry name" value="FabZ"/>
</dbReference>
<dbReference type="InterPro" id="IPR029069">
    <property type="entry name" value="HotDog_dom_sf"/>
</dbReference>
<dbReference type="NCBIfam" id="TIGR01750">
    <property type="entry name" value="fabZ"/>
    <property type="match status" value="1"/>
</dbReference>
<dbReference type="NCBIfam" id="NF000582">
    <property type="entry name" value="PRK00006.1"/>
    <property type="match status" value="1"/>
</dbReference>
<dbReference type="PANTHER" id="PTHR30272">
    <property type="entry name" value="3-HYDROXYACYL-[ACYL-CARRIER-PROTEIN] DEHYDRATASE"/>
    <property type="match status" value="1"/>
</dbReference>
<dbReference type="PANTHER" id="PTHR30272:SF1">
    <property type="entry name" value="3-HYDROXYACYL-[ACYL-CARRIER-PROTEIN] DEHYDRATASE"/>
    <property type="match status" value="1"/>
</dbReference>
<dbReference type="Pfam" id="PF07977">
    <property type="entry name" value="FabA"/>
    <property type="match status" value="1"/>
</dbReference>
<dbReference type="SUPFAM" id="SSF54637">
    <property type="entry name" value="Thioesterase/thiol ester dehydrase-isomerase"/>
    <property type="match status" value="1"/>
</dbReference>
<comment type="function">
    <text evidence="1">Involved in unsaturated fatty acids biosynthesis. Catalyzes the dehydration of short chain beta-hydroxyacyl-ACPs and long chain saturated and unsaturated beta-hydroxyacyl-ACPs.</text>
</comment>
<comment type="catalytic activity">
    <reaction evidence="1">
        <text>a (3R)-hydroxyacyl-[ACP] = a (2E)-enoyl-[ACP] + H2O</text>
        <dbReference type="Rhea" id="RHEA:13097"/>
        <dbReference type="Rhea" id="RHEA-COMP:9925"/>
        <dbReference type="Rhea" id="RHEA-COMP:9945"/>
        <dbReference type="ChEBI" id="CHEBI:15377"/>
        <dbReference type="ChEBI" id="CHEBI:78784"/>
        <dbReference type="ChEBI" id="CHEBI:78827"/>
        <dbReference type="EC" id="4.2.1.59"/>
    </reaction>
</comment>
<comment type="subunit">
    <text evidence="1">Oligomer.</text>
</comment>
<comment type="subcellular location">
    <subcellularLocation>
        <location evidence="1">Cytoplasm</location>
    </subcellularLocation>
</comment>
<comment type="PTM">
    <text evidence="1">The N-terminus is blocked.</text>
</comment>
<comment type="similarity">
    <text evidence="1">Belongs to the thioester dehydratase family. FabZ subfamily.</text>
</comment>
<name>FABZ_ECOHS</name>
<protein>
    <recommendedName>
        <fullName evidence="1">3-hydroxyacyl-[acyl-carrier-protein] dehydratase FabZ</fullName>
        <ecNumber evidence="1">4.2.1.59</ecNumber>
    </recommendedName>
    <alternativeName>
        <fullName evidence="1">(3R)-hydroxymyristoyl-[acyl-carrier-protein] dehydratase</fullName>
        <shortName evidence="1">(3R)-hydroxymyristoyl-ACP dehydrase</shortName>
    </alternativeName>
    <alternativeName>
        <fullName evidence="1">Beta-hydroxyacyl-ACP dehydratase</fullName>
    </alternativeName>
</protein>
<organism>
    <name type="scientific">Escherichia coli O9:H4 (strain HS)</name>
    <dbReference type="NCBI Taxonomy" id="331112"/>
    <lineage>
        <taxon>Bacteria</taxon>
        <taxon>Pseudomonadati</taxon>
        <taxon>Pseudomonadota</taxon>
        <taxon>Gammaproteobacteria</taxon>
        <taxon>Enterobacterales</taxon>
        <taxon>Enterobacteriaceae</taxon>
        <taxon>Escherichia</taxon>
    </lineage>
</organism>